<name>UBIE_FRATN</name>
<protein>
    <recommendedName>
        <fullName evidence="1">Ubiquinone/menaquinone biosynthesis C-methyltransferase UbiE</fullName>
        <ecNumber evidence="1">2.1.1.163</ecNumber>
        <ecNumber evidence="1">2.1.1.201</ecNumber>
    </recommendedName>
    <alternativeName>
        <fullName evidence="1">2-methoxy-6-polyprenyl-1,4-benzoquinol methylase</fullName>
    </alternativeName>
    <alternativeName>
        <fullName evidence="1">Demethylmenaquinone methyltransferase</fullName>
    </alternativeName>
</protein>
<keyword id="KW-0474">Menaquinone biosynthesis</keyword>
<keyword id="KW-0489">Methyltransferase</keyword>
<keyword id="KW-0949">S-adenosyl-L-methionine</keyword>
<keyword id="KW-0808">Transferase</keyword>
<keyword id="KW-0831">Ubiquinone biosynthesis</keyword>
<accession>A0Q549</accession>
<sequence>MSKENKTTDFGFTQVPWEEKQKKVAGVFHSVAAKYDLMNDLMSFGIHRIWKKQTIAKSGVRKGDNVLDLAGGTGDLAYKFCQMVGQQGKVILSDINSSMLEVGKEKLTNKGCVGNIEYVQANAECLPFPDNYFDCITISFGLRNVTDKEKALASMCRVLKPGGRLLVLEFSKPIIPLLSKVYDEYSFKALPFLGKIITQDAESYKYLAESIRKHPDQQTLKQMMYDAGFDNVEYQNMTGGIVALHIGYKY</sequence>
<gene>
    <name evidence="1" type="primary">ubiE</name>
    <name type="ordered locus">FTN_0461</name>
</gene>
<reference key="1">
    <citation type="journal article" date="2007" name="Genome Biol.">
        <title>Comparison of Francisella tularensis genomes reveals evolutionary events associated with the emergence of human pathogenic strains.</title>
        <authorList>
            <person name="Rohmer L."/>
            <person name="Fong C."/>
            <person name="Abmayr S."/>
            <person name="Wasnick M."/>
            <person name="Larson Freeman T.J."/>
            <person name="Radey M."/>
            <person name="Guina T."/>
            <person name="Svensson K."/>
            <person name="Hayden H.S."/>
            <person name="Jacobs M."/>
            <person name="Gallagher L.A."/>
            <person name="Manoil C."/>
            <person name="Ernst R.K."/>
            <person name="Drees B."/>
            <person name="Buckley D."/>
            <person name="Haugen E."/>
            <person name="Bovee D."/>
            <person name="Zhou Y."/>
            <person name="Chang J."/>
            <person name="Levy R."/>
            <person name="Lim R."/>
            <person name="Gillett W."/>
            <person name="Guenthener D."/>
            <person name="Kang A."/>
            <person name="Shaffer S.A."/>
            <person name="Taylor G."/>
            <person name="Chen J."/>
            <person name="Gallis B."/>
            <person name="D'Argenio D.A."/>
            <person name="Forsman M."/>
            <person name="Olson M.V."/>
            <person name="Goodlett D.R."/>
            <person name="Kaul R."/>
            <person name="Miller S.I."/>
            <person name="Brittnacher M.J."/>
        </authorList>
    </citation>
    <scope>NUCLEOTIDE SEQUENCE [LARGE SCALE GENOMIC DNA]</scope>
    <source>
        <strain>U112</strain>
    </source>
</reference>
<feature type="chain" id="PRO_1000056251" description="Ubiquinone/menaquinone biosynthesis C-methyltransferase UbiE">
    <location>
        <begin position="1"/>
        <end position="250"/>
    </location>
</feature>
<feature type="binding site" evidence="1">
    <location>
        <position position="73"/>
    </location>
    <ligand>
        <name>S-adenosyl-L-methionine</name>
        <dbReference type="ChEBI" id="CHEBI:59789"/>
    </ligand>
</feature>
<feature type="binding site" evidence="1">
    <location>
        <position position="94"/>
    </location>
    <ligand>
        <name>S-adenosyl-L-methionine</name>
        <dbReference type="ChEBI" id="CHEBI:59789"/>
    </ligand>
</feature>
<feature type="binding site" evidence="1">
    <location>
        <begin position="122"/>
        <end position="123"/>
    </location>
    <ligand>
        <name>S-adenosyl-L-methionine</name>
        <dbReference type="ChEBI" id="CHEBI:59789"/>
    </ligand>
</feature>
<feature type="binding site" evidence="1">
    <location>
        <position position="139"/>
    </location>
    <ligand>
        <name>S-adenosyl-L-methionine</name>
        <dbReference type="ChEBI" id="CHEBI:59789"/>
    </ligand>
</feature>
<evidence type="ECO:0000255" key="1">
    <source>
        <dbReference type="HAMAP-Rule" id="MF_01813"/>
    </source>
</evidence>
<proteinExistence type="inferred from homology"/>
<organism>
    <name type="scientific">Francisella tularensis subsp. novicida (strain U112)</name>
    <dbReference type="NCBI Taxonomy" id="401614"/>
    <lineage>
        <taxon>Bacteria</taxon>
        <taxon>Pseudomonadati</taxon>
        <taxon>Pseudomonadota</taxon>
        <taxon>Gammaproteobacteria</taxon>
        <taxon>Thiotrichales</taxon>
        <taxon>Francisellaceae</taxon>
        <taxon>Francisella</taxon>
    </lineage>
</organism>
<comment type="function">
    <text evidence="1">Methyltransferase required for the conversion of demethylmenaquinol (DMKH2) to menaquinol (MKH2) and the conversion of 2-polyprenyl-6-methoxy-1,4-benzoquinol (DDMQH2) to 2-polyprenyl-3-methyl-6-methoxy-1,4-benzoquinol (DMQH2).</text>
</comment>
<comment type="catalytic activity">
    <reaction evidence="1">
        <text>a 2-demethylmenaquinol + S-adenosyl-L-methionine = a menaquinol + S-adenosyl-L-homocysteine + H(+)</text>
        <dbReference type="Rhea" id="RHEA:42640"/>
        <dbReference type="Rhea" id="RHEA-COMP:9539"/>
        <dbReference type="Rhea" id="RHEA-COMP:9563"/>
        <dbReference type="ChEBI" id="CHEBI:15378"/>
        <dbReference type="ChEBI" id="CHEBI:18151"/>
        <dbReference type="ChEBI" id="CHEBI:55437"/>
        <dbReference type="ChEBI" id="CHEBI:57856"/>
        <dbReference type="ChEBI" id="CHEBI:59789"/>
        <dbReference type="EC" id="2.1.1.163"/>
    </reaction>
</comment>
<comment type="catalytic activity">
    <reaction evidence="1">
        <text>a 2-methoxy-6-(all-trans-polyprenyl)benzene-1,4-diol + S-adenosyl-L-methionine = a 5-methoxy-2-methyl-3-(all-trans-polyprenyl)benzene-1,4-diol + S-adenosyl-L-homocysteine + H(+)</text>
        <dbReference type="Rhea" id="RHEA:28286"/>
        <dbReference type="Rhea" id="RHEA-COMP:10858"/>
        <dbReference type="Rhea" id="RHEA-COMP:10859"/>
        <dbReference type="ChEBI" id="CHEBI:15378"/>
        <dbReference type="ChEBI" id="CHEBI:57856"/>
        <dbReference type="ChEBI" id="CHEBI:59789"/>
        <dbReference type="ChEBI" id="CHEBI:84166"/>
        <dbReference type="ChEBI" id="CHEBI:84167"/>
        <dbReference type="EC" id="2.1.1.201"/>
    </reaction>
</comment>
<comment type="pathway">
    <text evidence="1">Quinol/quinone metabolism; menaquinone biosynthesis; menaquinol from 1,4-dihydroxy-2-naphthoate: step 2/2.</text>
</comment>
<comment type="pathway">
    <text evidence="1">Cofactor biosynthesis; ubiquinone biosynthesis.</text>
</comment>
<comment type="similarity">
    <text evidence="1">Belongs to the class I-like SAM-binding methyltransferase superfamily. MenG/UbiE family.</text>
</comment>
<dbReference type="EC" id="2.1.1.163" evidence="1"/>
<dbReference type="EC" id="2.1.1.201" evidence="1"/>
<dbReference type="EMBL" id="CP000439">
    <property type="protein sequence ID" value="ABK89364.1"/>
    <property type="molecule type" value="Genomic_DNA"/>
</dbReference>
<dbReference type="RefSeq" id="WP_003038484.1">
    <property type="nucleotide sequence ID" value="NC_008601.1"/>
</dbReference>
<dbReference type="SMR" id="A0Q549"/>
<dbReference type="KEGG" id="ftn:FTN_0461"/>
<dbReference type="KEGG" id="ftx:AW25_1572"/>
<dbReference type="BioCyc" id="FTUL401614:G1G75-481-MONOMER"/>
<dbReference type="UniPathway" id="UPA00079">
    <property type="reaction ID" value="UER00169"/>
</dbReference>
<dbReference type="UniPathway" id="UPA00232"/>
<dbReference type="Proteomes" id="UP000000762">
    <property type="component" value="Chromosome"/>
</dbReference>
<dbReference type="GO" id="GO:0008425">
    <property type="term" value="F:2-methoxy-6-polyprenyl-1,4-benzoquinol methyltransferase activity"/>
    <property type="evidence" value="ECO:0007669"/>
    <property type="project" value="UniProtKB-UniRule"/>
</dbReference>
<dbReference type="GO" id="GO:0043770">
    <property type="term" value="F:demethylmenaquinone methyltransferase activity"/>
    <property type="evidence" value="ECO:0007669"/>
    <property type="project" value="UniProtKB-UniRule"/>
</dbReference>
<dbReference type="GO" id="GO:0009060">
    <property type="term" value="P:aerobic respiration"/>
    <property type="evidence" value="ECO:0007669"/>
    <property type="project" value="UniProtKB-UniRule"/>
</dbReference>
<dbReference type="GO" id="GO:0009234">
    <property type="term" value="P:menaquinone biosynthetic process"/>
    <property type="evidence" value="ECO:0007669"/>
    <property type="project" value="UniProtKB-UniRule"/>
</dbReference>
<dbReference type="GO" id="GO:0032259">
    <property type="term" value="P:methylation"/>
    <property type="evidence" value="ECO:0007669"/>
    <property type="project" value="UniProtKB-KW"/>
</dbReference>
<dbReference type="CDD" id="cd02440">
    <property type="entry name" value="AdoMet_MTases"/>
    <property type="match status" value="1"/>
</dbReference>
<dbReference type="FunFam" id="3.40.50.150:FF:000014">
    <property type="entry name" value="Ubiquinone/menaquinone biosynthesis C-methyltransferase UbiE"/>
    <property type="match status" value="1"/>
</dbReference>
<dbReference type="Gene3D" id="3.40.50.150">
    <property type="entry name" value="Vaccinia Virus protein VP39"/>
    <property type="match status" value="1"/>
</dbReference>
<dbReference type="HAMAP" id="MF_01813">
    <property type="entry name" value="MenG_UbiE_methyltr"/>
    <property type="match status" value="1"/>
</dbReference>
<dbReference type="InterPro" id="IPR029063">
    <property type="entry name" value="SAM-dependent_MTases_sf"/>
</dbReference>
<dbReference type="InterPro" id="IPR004033">
    <property type="entry name" value="UbiE/COQ5_MeTrFase"/>
</dbReference>
<dbReference type="InterPro" id="IPR023576">
    <property type="entry name" value="UbiE/COQ5_MeTrFase_CS"/>
</dbReference>
<dbReference type="NCBIfam" id="TIGR01934">
    <property type="entry name" value="MenG_MenH_UbiE"/>
    <property type="match status" value="1"/>
</dbReference>
<dbReference type="NCBIfam" id="NF001240">
    <property type="entry name" value="PRK00216.1-1"/>
    <property type="match status" value="1"/>
</dbReference>
<dbReference type="NCBIfam" id="NF001242">
    <property type="entry name" value="PRK00216.1-3"/>
    <property type="match status" value="1"/>
</dbReference>
<dbReference type="NCBIfam" id="NF001244">
    <property type="entry name" value="PRK00216.1-5"/>
    <property type="match status" value="1"/>
</dbReference>
<dbReference type="PANTHER" id="PTHR43591:SF24">
    <property type="entry name" value="2-METHOXY-6-POLYPRENYL-1,4-BENZOQUINOL METHYLASE, MITOCHONDRIAL"/>
    <property type="match status" value="1"/>
</dbReference>
<dbReference type="PANTHER" id="PTHR43591">
    <property type="entry name" value="METHYLTRANSFERASE"/>
    <property type="match status" value="1"/>
</dbReference>
<dbReference type="Pfam" id="PF01209">
    <property type="entry name" value="Ubie_methyltran"/>
    <property type="match status" value="1"/>
</dbReference>
<dbReference type="SUPFAM" id="SSF53335">
    <property type="entry name" value="S-adenosyl-L-methionine-dependent methyltransferases"/>
    <property type="match status" value="1"/>
</dbReference>
<dbReference type="PROSITE" id="PS51608">
    <property type="entry name" value="SAM_MT_UBIE"/>
    <property type="match status" value="1"/>
</dbReference>
<dbReference type="PROSITE" id="PS01183">
    <property type="entry name" value="UBIE_1"/>
    <property type="match status" value="1"/>
</dbReference>
<dbReference type="PROSITE" id="PS01184">
    <property type="entry name" value="UBIE_2"/>
    <property type="match status" value="1"/>
</dbReference>